<gene>
    <name type="primary">FAM151B</name>
    <name type="ORF">UNQ9217/PRO28685</name>
</gene>
<organism>
    <name type="scientific">Homo sapiens</name>
    <name type="common">Human</name>
    <dbReference type="NCBI Taxonomy" id="9606"/>
    <lineage>
        <taxon>Eukaryota</taxon>
        <taxon>Metazoa</taxon>
        <taxon>Chordata</taxon>
        <taxon>Craniata</taxon>
        <taxon>Vertebrata</taxon>
        <taxon>Euteleostomi</taxon>
        <taxon>Mammalia</taxon>
        <taxon>Eutheria</taxon>
        <taxon>Euarchontoglires</taxon>
        <taxon>Primates</taxon>
        <taxon>Haplorrhini</taxon>
        <taxon>Catarrhini</taxon>
        <taxon>Hominidae</taxon>
        <taxon>Homo</taxon>
    </lineage>
</organism>
<dbReference type="EMBL" id="AY358256">
    <property type="protein sequence ID" value="AAQ88623.1"/>
    <property type="molecule type" value="mRNA"/>
</dbReference>
<dbReference type="EMBL" id="AC008771">
    <property type="status" value="NOT_ANNOTATED_CDS"/>
    <property type="molecule type" value="Genomic_DNA"/>
</dbReference>
<dbReference type="EMBL" id="AC018764">
    <property type="status" value="NOT_ANNOTATED_CDS"/>
    <property type="molecule type" value="Genomic_DNA"/>
</dbReference>
<dbReference type="EMBL" id="CH471084">
    <property type="protein sequence ID" value="EAW95855.1"/>
    <property type="molecule type" value="Genomic_DNA"/>
</dbReference>
<dbReference type="EMBL" id="BC131563">
    <property type="protein sequence ID" value="AAI31564.1"/>
    <property type="molecule type" value="mRNA"/>
</dbReference>
<dbReference type="CCDS" id="CCDS4051.1"/>
<dbReference type="RefSeq" id="NP_991111.2">
    <property type="nucleotide sequence ID" value="NM_205548.3"/>
</dbReference>
<dbReference type="SMR" id="Q6UXP7"/>
<dbReference type="BioGRID" id="127948">
    <property type="interactions" value="1"/>
</dbReference>
<dbReference type="FunCoup" id="Q6UXP7">
    <property type="interactions" value="243"/>
</dbReference>
<dbReference type="IntAct" id="Q6UXP7">
    <property type="interactions" value="2"/>
</dbReference>
<dbReference type="MINT" id="Q6UXP7"/>
<dbReference type="STRING" id="9606.ENSP00000282226"/>
<dbReference type="iPTMnet" id="Q6UXP7"/>
<dbReference type="PhosphoSitePlus" id="Q6UXP7"/>
<dbReference type="BioMuta" id="FAM151B"/>
<dbReference type="DMDM" id="296434497"/>
<dbReference type="jPOST" id="Q6UXP7"/>
<dbReference type="MassIVE" id="Q6UXP7"/>
<dbReference type="PaxDb" id="9606-ENSP00000282226"/>
<dbReference type="PeptideAtlas" id="Q6UXP7"/>
<dbReference type="ProteomicsDB" id="67643"/>
<dbReference type="Pumba" id="Q6UXP7"/>
<dbReference type="Antibodypedia" id="49116">
    <property type="antibodies" value="50 antibodies from 10 providers"/>
</dbReference>
<dbReference type="DNASU" id="167555"/>
<dbReference type="Ensembl" id="ENST00000282226.5">
    <property type="protein sequence ID" value="ENSP00000282226.4"/>
    <property type="gene ID" value="ENSG00000152380.10"/>
</dbReference>
<dbReference type="GeneID" id="167555"/>
<dbReference type="KEGG" id="hsa:167555"/>
<dbReference type="MANE-Select" id="ENST00000282226.5">
    <property type="protein sequence ID" value="ENSP00000282226.4"/>
    <property type="RefSeq nucleotide sequence ID" value="NM_205548.3"/>
    <property type="RefSeq protein sequence ID" value="NP_991111.2"/>
</dbReference>
<dbReference type="UCSC" id="uc003kgv.3">
    <property type="organism name" value="human"/>
</dbReference>
<dbReference type="AGR" id="HGNC:33716"/>
<dbReference type="CTD" id="167555"/>
<dbReference type="GeneCards" id="FAM151B"/>
<dbReference type="HGNC" id="HGNC:33716">
    <property type="gene designation" value="FAM151B"/>
</dbReference>
<dbReference type="HPA" id="ENSG00000152380">
    <property type="expression patterns" value="Tissue enhanced (bone)"/>
</dbReference>
<dbReference type="neXtProt" id="NX_Q6UXP7"/>
<dbReference type="OpenTargets" id="ENSG00000152380"/>
<dbReference type="PharmGKB" id="PA162386486"/>
<dbReference type="VEuPathDB" id="HostDB:ENSG00000152380"/>
<dbReference type="eggNOG" id="KOG3748">
    <property type="taxonomic scope" value="Eukaryota"/>
</dbReference>
<dbReference type="GeneTree" id="ENSGT00530000063681"/>
<dbReference type="HOGENOM" id="CLU_033162_1_1_1"/>
<dbReference type="InParanoid" id="Q6UXP7"/>
<dbReference type="OMA" id="GFTLWWA"/>
<dbReference type="OrthoDB" id="413402at2759"/>
<dbReference type="PAN-GO" id="Q6UXP7">
    <property type="GO annotations" value="1 GO annotation based on evolutionary models"/>
</dbReference>
<dbReference type="PhylomeDB" id="Q6UXP7"/>
<dbReference type="TreeFam" id="TF315079"/>
<dbReference type="PathwayCommons" id="Q6UXP7"/>
<dbReference type="SignaLink" id="Q6UXP7"/>
<dbReference type="BioGRID-ORCS" id="167555">
    <property type="hits" value="6 hits in 1147 CRISPR screens"/>
</dbReference>
<dbReference type="ChiTaRS" id="FAM151B">
    <property type="organism name" value="human"/>
</dbReference>
<dbReference type="GenomeRNAi" id="167555"/>
<dbReference type="Pharos" id="Q6UXP7">
    <property type="development level" value="Tdark"/>
</dbReference>
<dbReference type="PRO" id="PR:Q6UXP7"/>
<dbReference type="Proteomes" id="UP000005640">
    <property type="component" value="Chromosome 5"/>
</dbReference>
<dbReference type="RNAct" id="Q6UXP7">
    <property type="molecule type" value="protein"/>
</dbReference>
<dbReference type="Bgee" id="ENSG00000152380">
    <property type="expression patterns" value="Expressed in primordial germ cell in gonad and 107 other cell types or tissues"/>
</dbReference>
<dbReference type="ExpressionAtlas" id="Q6UXP7">
    <property type="expression patterns" value="baseline and differential"/>
</dbReference>
<dbReference type="GO" id="GO:0005615">
    <property type="term" value="C:extracellular space"/>
    <property type="evidence" value="ECO:0000318"/>
    <property type="project" value="GO_Central"/>
</dbReference>
<dbReference type="GO" id="GO:0042461">
    <property type="term" value="P:photoreceptor cell development"/>
    <property type="evidence" value="ECO:0000250"/>
    <property type="project" value="UniProtKB"/>
</dbReference>
<dbReference type="InterPro" id="IPR019356">
    <property type="entry name" value="Memorin"/>
</dbReference>
<dbReference type="PANTHER" id="PTHR21184">
    <property type="entry name" value="MENORIN (DENDRITIC BRANCHING PROTEIN)"/>
    <property type="match status" value="1"/>
</dbReference>
<dbReference type="PANTHER" id="PTHR21184:SF3">
    <property type="entry name" value="PROTEIN FAM151B"/>
    <property type="match status" value="1"/>
</dbReference>
<dbReference type="Pfam" id="PF10223">
    <property type="entry name" value="Menorin"/>
    <property type="match status" value="1"/>
</dbReference>
<reference key="1">
    <citation type="journal article" date="2003" name="Genome Res.">
        <title>The secreted protein discovery initiative (SPDI), a large-scale effort to identify novel human secreted and transmembrane proteins: a bioinformatics assessment.</title>
        <authorList>
            <person name="Clark H.F."/>
            <person name="Gurney A.L."/>
            <person name="Abaya E."/>
            <person name="Baker K."/>
            <person name="Baldwin D.T."/>
            <person name="Brush J."/>
            <person name="Chen J."/>
            <person name="Chow B."/>
            <person name="Chui C."/>
            <person name="Crowley C."/>
            <person name="Currell B."/>
            <person name="Deuel B."/>
            <person name="Dowd P."/>
            <person name="Eaton D."/>
            <person name="Foster J.S."/>
            <person name="Grimaldi C."/>
            <person name="Gu Q."/>
            <person name="Hass P.E."/>
            <person name="Heldens S."/>
            <person name="Huang A."/>
            <person name="Kim H.S."/>
            <person name="Klimowski L."/>
            <person name="Jin Y."/>
            <person name="Johnson S."/>
            <person name="Lee J."/>
            <person name="Lewis L."/>
            <person name="Liao D."/>
            <person name="Mark M.R."/>
            <person name="Robbie E."/>
            <person name="Sanchez C."/>
            <person name="Schoenfeld J."/>
            <person name="Seshagiri S."/>
            <person name="Simmons L."/>
            <person name="Singh J."/>
            <person name="Smith V."/>
            <person name="Stinson J."/>
            <person name="Vagts A."/>
            <person name="Vandlen R.L."/>
            <person name="Watanabe C."/>
            <person name="Wieand D."/>
            <person name="Woods K."/>
            <person name="Xie M.-H."/>
            <person name="Yansura D.G."/>
            <person name="Yi S."/>
            <person name="Yu G."/>
            <person name="Yuan J."/>
            <person name="Zhang M."/>
            <person name="Zhang Z."/>
            <person name="Goddard A.D."/>
            <person name="Wood W.I."/>
            <person name="Godowski P.J."/>
            <person name="Gray A.M."/>
        </authorList>
    </citation>
    <scope>NUCLEOTIDE SEQUENCE [LARGE SCALE MRNA]</scope>
    <scope>VARIANT THR-155</scope>
</reference>
<reference key="2">
    <citation type="journal article" date="2004" name="Nature">
        <title>The DNA sequence and comparative analysis of human chromosome 5.</title>
        <authorList>
            <person name="Schmutz J."/>
            <person name="Martin J."/>
            <person name="Terry A."/>
            <person name="Couronne O."/>
            <person name="Grimwood J."/>
            <person name="Lowry S."/>
            <person name="Gordon L.A."/>
            <person name="Scott D."/>
            <person name="Xie G."/>
            <person name="Huang W."/>
            <person name="Hellsten U."/>
            <person name="Tran-Gyamfi M."/>
            <person name="She X."/>
            <person name="Prabhakar S."/>
            <person name="Aerts A."/>
            <person name="Altherr M."/>
            <person name="Bajorek E."/>
            <person name="Black S."/>
            <person name="Branscomb E."/>
            <person name="Caoile C."/>
            <person name="Challacombe J.F."/>
            <person name="Chan Y.M."/>
            <person name="Denys M."/>
            <person name="Detter J.C."/>
            <person name="Escobar J."/>
            <person name="Flowers D."/>
            <person name="Fotopulos D."/>
            <person name="Glavina T."/>
            <person name="Gomez M."/>
            <person name="Gonzales E."/>
            <person name="Goodstein D."/>
            <person name="Grigoriev I."/>
            <person name="Groza M."/>
            <person name="Hammon N."/>
            <person name="Hawkins T."/>
            <person name="Haydu L."/>
            <person name="Israni S."/>
            <person name="Jett J."/>
            <person name="Kadner K."/>
            <person name="Kimball H."/>
            <person name="Kobayashi A."/>
            <person name="Lopez F."/>
            <person name="Lou Y."/>
            <person name="Martinez D."/>
            <person name="Medina C."/>
            <person name="Morgan J."/>
            <person name="Nandkeshwar R."/>
            <person name="Noonan J.P."/>
            <person name="Pitluck S."/>
            <person name="Pollard M."/>
            <person name="Predki P."/>
            <person name="Priest J."/>
            <person name="Ramirez L."/>
            <person name="Retterer J."/>
            <person name="Rodriguez A."/>
            <person name="Rogers S."/>
            <person name="Salamov A."/>
            <person name="Salazar A."/>
            <person name="Thayer N."/>
            <person name="Tice H."/>
            <person name="Tsai M."/>
            <person name="Ustaszewska A."/>
            <person name="Vo N."/>
            <person name="Wheeler J."/>
            <person name="Wu K."/>
            <person name="Yang J."/>
            <person name="Dickson M."/>
            <person name="Cheng J.-F."/>
            <person name="Eichler E.E."/>
            <person name="Olsen A."/>
            <person name="Pennacchio L.A."/>
            <person name="Rokhsar D.S."/>
            <person name="Richardson P."/>
            <person name="Lucas S.M."/>
            <person name="Myers R.M."/>
            <person name="Rubin E.M."/>
        </authorList>
    </citation>
    <scope>NUCLEOTIDE SEQUENCE [LARGE SCALE GENOMIC DNA]</scope>
</reference>
<reference key="3">
    <citation type="submission" date="2005-07" db="EMBL/GenBank/DDBJ databases">
        <authorList>
            <person name="Mural R.J."/>
            <person name="Istrail S."/>
            <person name="Sutton G.G."/>
            <person name="Florea L."/>
            <person name="Halpern A.L."/>
            <person name="Mobarry C.M."/>
            <person name="Lippert R."/>
            <person name="Walenz B."/>
            <person name="Shatkay H."/>
            <person name="Dew I."/>
            <person name="Miller J.R."/>
            <person name="Flanigan M.J."/>
            <person name="Edwards N.J."/>
            <person name="Bolanos R."/>
            <person name="Fasulo D."/>
            <person name="Halldorsson B.V."/>
            <person name="Hannenhalli S."/>
            <person name="Turner R."/>
            <person name="Yooseph S."/>
            <person name="Lu F."/>
            <person name="Nusskern D.R."/>
            <person name="Shue B.C."/>
            <person name="Zheng X.H."/>
            <person name="Zhong F."/>
            <person name="Delcher A.L."/>
            <person name="Huson D.H."/>
            <person name="Kravitz S.A."/>
            <person name="Mouchard L."/>
            <person name="Reinert K."/>
            <person name="Remington K.A."/>
            <person name="Clark A.G."/>
            <person name="Waterman M.S."/>
            <person name="Eichler E.E."/>
            <person name="Adams M.D."/>
            <person name="Hunkapiller M.W."/>
            <person name="Myers E.W."/>
            <person name="Venter J.C."/>
        </authorList>
    </citation>
    <scope>NUCLEOTIDE SEQUENCE [LARGE SCALE GENOMIC DNA]</scope>
    <scope>VARIANT THR-155</scope>
</reference>
<reference key="4">
    <citation type="journal article" date="2004" name="Genome Res.">
        <title>The status, quality, and expansion of the NIH full-length cDNA project: the Mammalian Gene Collection (MGC).</title>
        <authorList>
            <consortium name="The MGC Project Team"/>
        </authorList>
    </citation>
    <scope>NUCLEOTIDE SEQUENCE [LARGE SCALE MRNA]</scope>
</reference>
<feature type="chain" id="PRO_0000317105" description="Protein FAM151B">
    <location>
        <begin position="1"/>
        <end position="276"/>
    </location>
</feature>
<feature type="sequence variant" id="VAR_053992" description="In dbSNP:rs369998." evidence="2 3">
    <original>I</original>
    <variation>T</variation>
    <location>
        <position position="155"/>
    </location>
</feature>
<proteinExistence type="evidence at protein level"/>
<evidence type="ECO:0000250" key="1">
    <source>
        <dbReference type="UniProtKB" id="D3YUE4"/>
    </source>
</evidence>
<evidence type="ECO:0000269" key="2">
    <source>
    </source>
</evidence>
<evidence type="ECO:0000269" key="3">
    <source ref="3"/>
</evidence>
<evidence type="ECO:0000305" key="4"/>
<comment type="function">
    <text evidence="1">Essential for survival of retinal photoreceptor cells.</text>
</comment>
<comment type="interaction">
    <interactant intactId="EBI-8456391">
        <id>Q6UXP7</id>
    </interactant>
    <interactant intactId="EBI-2342111">
        <id>Q9C019</id>
        <label>TRIM15</label>
    </interactant>
    <organismsDiffer>false</organismsDiffer>
    <experiments>3</experiments>
</comment>
<comment type="similarity">
    <text evidence="4">Belongs to the menorin family.</text>
</comment>
<sequence length="276" mass="31367">MAASAGGPGSWSENILEYFLRNSQITAEDGAEITWYHAANHKAQTNEALKSTAHMIEADVLLPSDGSEHSQPIMAHPPETNSDNTLQEWLTEVMKSNKGIKLDFKSLAVVEPSMMLLENVKRHLKRPVWINADILPGPNGNSKVIDAKPFLDTVISFFPDVTFSLGWTTGWHPEKVNEGYSWTMVKEMEYICNELSQPVTFPVRAALVRQSCSQLLWLLKKSNRYSLTIWTGKNDNYSVEDLLYIRDHFDKKQVFYDILEPQNHEFKQAIGIKVNL</sequence>
<keyword id="KW-1267">Proteomics identification</keyword>
<keyword id="KW-1185">Reference proteome</keyword>
<name>F151B_HUMAN</name>
<accession>Q6UXP7</accession>
<accession>A2RRE4</accession>
<protein>
    <recommendedName>
        <fullName>Protein FAM151B</fullName>
    </recommendedName>
</protein>